<keyword id="KW-0067">ATP-binding</keyword>
<keyword id="KW-0227">DNA damage</keyword>
<keyword id="KW-0234">DNA repair</keyword>
<keyword id="KW-0238">DNA-binding</keyword>
<keyword id="KW-0269">Exonuclease</keyword>
<keyword id="KW-0347">Helicase</keyword>
<keyword id="KW-0378">Hydrolase</keyword>
<keyword id="KW-0413">Isomerase</keyword>
<keyword id="KW-0540">Nuclease</keyword>
<keyword id="KW-0547">Nucleotide-binding</keyword>
<accession>B9DZK4</accession>
<sequence length="1238" mass="144811">MINVNTKWTETQKSAIFTPNCNLLVAAGAGTGKTAVLVERILQKVINDSEEVDIDKLLVVTFTNAAASEMKERVGEALSKLLELNCTSKNLQRQLALLNQSNIMTIHSFCLKVIKNNFHRIDLDPNFRICDDTESKLLKQDALLELFEEKYEEENLGFLNLADGYGGKNDSKLQDIVLSLYEFSQGSPWPKRWLQDVLKDFNLGSDFDFGDTKWAKVLMHNVTVELKGCKNKMKNILNTIENIEGLEHYLEPFKSDIESIDKLINITTWDEIRDEFIKLSFNKLPSKRTDPLVKSYKDKARNTRDEVKKKLISIREDIILCTDDIYENFKEVYPLMKSLTFLVMDFYEKYHNKKSERNMIDFNDIEHFCLEILTSKDKNGDIIPSEAALEYREYFEEIFIDEYQDSNEVQEVIMNMISRKNIYANLFMVGDVKQSIYRFRQARPELFLEKYNSYDEKEGSKNRKIKLSENFRSRKEIIDAINYIFKQIMCREVGELDYGEEECLKSSARYEPFEGNCGGDVELHVVDKKENENKLEDENEEELLDAISVEARLVASKINELVNPSLDQYSFKVYDKEIDNYRSIMYKDIVILMRATQNWAPAFVEELNNSGIPVFADTSVGYFQAIEIKTIISLLQIIDNPLQDIPFIALLRSPIGGFSPEDLIDLRVVNREISFYEILKAIKEHSLELKYSLEHIDERLEYKVEQFFNKLCLWRRKVIHMPIDEFIWHIYIETGYYGFVGAMPGGIQRQANLRMLFERAKQYKNISYKGLFNFINFINKLKSSSTDMGNAKILGENENVVRIMSIHKSKGLEFPVIILSGAGKRFNLTDINKSVLFHKELGLGPEYVNSERHISYPTIVKQVLKRKLKMETLSEEMRILYVAFTRAKEKLIITGTVDNIENTFQRWCEAAYCEEDKLPEYSLINSRNFLDWIGPAVARHPCGEIIRKVCPFEYNLNLITGDDSKWKVFVYSKDNFKSTLDENIDEDIIGKIKSLELDNNKEIYKNEVYRRLNWTYKYEQSSKIAAKFSVSELKRRFKLIDTENGIEFMEPIYLKKPAFLRESKGLTPSERGIVMHLVMQHIDIDKVGSYEQIKEQVDKLVFREFITEAEAKSISVYKIIKFFNSEIGIRMKKSNNVYREVPFYMEIESTELYKQLPQHIYRDEKVLIQGIIDCYFEENNELILVDYKTDHVGDIDSIKEKYQVQIYYYGRALEKLTGKKVKKKYLYLFSKDYILDLS</sequence>
<proteinExistence type="inferred from homology"/>
<protein>
    <recommendedName>
        <fullName evidence="1">ATP-dependent helicase/nuclease subunit A</fullName>
        <ecNumber evidence="1">3.1.-.-</ecNumber>
        <ecNumber evidence="1">5.6.2.4</ecNumber>
    </recommendedName>
    <alternativeName>
        <fullName evidence="1">ATP-dependent helicase/nuclease AddA</fullName>
    </alternativeName>
    <alternativeName>
        <fullName evidence="1">DNA 3'-5' helicase AddA</fullName>
    </alternativeName>
</protein>
<comment type="function">
    <text evidence="1">The heterodimer acts as both an ATP-dependent DNA helicase and an ATP-dependent, dual-direction single-stranded exonuclease. Recognizes the chi site generating a DNA molecule suitable for the initiation of homologous recombination. The AddA nuclease domain is required for chi fragment generation; this subunit has the helicase and 3' -&gt; 5' nuclease activities.</text>
</comment>
<comment type="catalytic activity">
    <reaction evidence="1">
        <text>Couples ATP hydrolysis with the unwinding of duplex DNA by translocating in the 3'-5' direction.</text>
        <dbReference type="EC" id="5.6.2.4"/>
    </reaction>
</comment>
<comment type="catalytic activity">
    <reaction evidence="1">
        <text>ATP + H2O = ADP + phosphate + H(+)</text>
        <dbReference type="Rhea" id="RHEA:13065"/>
        <dbReference type="ChEBI" id="CHEBI:15377"/>
        <dbReference type="ChEBI" id="CHEBI:15378"/>
        <dbReference type="ChEBI" id="CHEBI:30616"/>
        <dbReference type="ChEBI" id="CHEBI:43474"/>
        <dbReference type="ChEBI" id="CHEBI:456216"/>
        <dbReference type="EC" id="5.6.2.4"/>
    </reaction>
</comment>
<comment type="cofactor">
    <cofactor evidence="1">
        <name>Mg(2+)</name>
        <dbReference type="ChEBI" id="CHEBI:18420"/>
    </cofactor>
</comment>
<comment type="subunit">
    <text evidence="1">Heterodimer of AddA and AddB/RexB.</text>
</comment>
<comment type="similarity">
    <text evidence="1">Belongs to the helicase family. AddA subfamily.</text>
</comment>
<gene>
    <name evidence="1" type="primary">addA</name>
    <name type="ordered locus">CKR_0628</name>
</gene>
<name>ADDA_CLOK1</name>
<feature type="chain" id="PRO_0000379259" description="ATP-dependent helicase/nuclease subunit A">
    <location>
        <begin position="1"/>
        <end position="1238"/>
    </location>
</feature>
<feature type="domain" description="UvrD-like helicase ATP-binding" evidence="1">
    <location>
        <begin position="6"/>
        <end position="474"/>
    </location>
</feature>
<feature type="domain" description="UvrD-like helicase C-terminal" evidence="1">
    <location>
        <begin position="512"/>
        <end position="811"/>
    </location>
</feature>
<feature type="binding site" evidence="1">
    <location>
        <begin position="27"/>
        <end position="34"/>
    </location>
    <ligand>
        <name>ATP</name>
        <dbReference type="ChEBI" id="CHEBI:30616"/>
    </ligand>
</feature>
<organism>
    <name type="scientific">Clostridium kluyveri (strain NBRC 12016)</name>
    <dbReference type="NCBI Taxonomy" id="583346"/>
    <lineage>
        <taxon>Bacteria</taxon>
        <taxon>Bacillati</taxon>
        <taxon>Bacillota</taxon>
        <taxon>Clostridia</taxon>
        <taxon>Eubacteriales</taxon>
        <taxon>Clostridiaceae</taxon>
        <taxon>Clostridium</taxon>
    </lineage>
</organism>
<reference key="1">
    <citation type="submission" date="2005-09" db="EMBL/GenBank/DDBJ databases">
        <title>Complete genome sequence of Clostridium kluyveri and comparative genomics of Clostridia species.</title>
        <authorList>
            <person name="Inui M."/>
            <person name="Nonaka H."/>
            <person name="Shinoda Y."/>
            <person name="Ikenaga Y."/>
            <person name="Abe M."/>
            <person name="Naito K."/>
            <person name="Vertes A.A."/>
            <person name="Yukawa H."/>
        </authorList>
    </citation>
    <scope>NUCLEOTIDE SEQUENCE [LARGE SCALE GENOMIC DNA]</scope>
    <source>
        <strain>NBRC 12016</strain>
    </source>
</reference>
<dbReference type="EC" id="3.1.-.-" evidence="1"/>
<dbReference type="EC" id="5.6.2.4" evidence="1"/>
<dbReference type="EMBL" id="AP009049">
    <property type="protein sequence ID" value="BAH05679.1"/>
    <property type="molecule type" value="Genomic_DNA"/>
</dbReference>
<dbReference type="SMR" id="B9DZK4"/>
<dbReference type="KEGG" id="ckr:CKR_0628"/>
<dbReference type="HOGENOM" id="CLU_001114_3_1_9"/>
<dbReference type="Proteomes" id="UP000007969">
    <property type="component" value="Chromosome"/>
</dbReference>
<dbReference type="GO" id="GO:0005829">
    <property type="term" value="C:cytosol"/>
    <property type="evidence" value="ECO:0007669"/>
    <property type="project" value="TreeGrafter"/>
</dbReference>
<dbReference type="GO" id="GO:0033202">
    <property type="term" value="C:DNA helicase complex"/>
    <property type="evidence" value="ECO:0007669"/>
    <property type="project" value="TreeGrafter"/>
</dbReference>
<dbReference type="GO" id="GO:0043138">
    <property type="term" value="F:3'-5' DNA helicase activity"/>
    <property type="evidence" value="ECO:0007669"/>
    <property type="project" value="UniProtKB-UniRule"/>
</dbReference>
<dbReference type="GO" id="GO:0008408">
    <property type="term" value="F:3'-5' exonuclease activity"/>
    <property type="evidence" value="ECO:0007669"/>
    <property type="project" value="UniProtKB-UniRule"/>
</dbReference>
<dbReference type="GO" id="GO:0005524">
    <property type="term" value="F:ATP binding"/>
    <property type="evidence" value="ECO:0007669"/>
    <property type="project" value="UniProtKB-UniRule"/>
</dbReference>
<dbReference type="GO" id="GO:0016887">
    <property type="term" value="F:ATP hydrolysis activity"/>
    <property type="evidence" value="ECO:0007669"/>
    <property type="project" value="RHEA"/>
</dbReference>
<dbReference type="GO" id="GO:0003690">
    <property type="term" value="F:double-stranded DNA binding"/>
    <property type="evidence" value="ECO:0007669"/>
    <property type="project" value="UniProtKB-UniRule"/>
</dbReference>
<dbReference type="GO" id="GO:0000724">
    <property type="term" value="P:double-strand break repair via homologous recombination"/>
    <property type="evidence" value="ECO:0007669"/>
    <property type="project" value="UniProtKB-UniRule"/>
</dbReference>
<dbReference type="FunFam" id="3.40.50.300:FF:001236">
    <property type="entry name" value="ATP-dependent helicase/nuclease subunit A"/>
    <property type="match status" value="1"/>
</dbReference>
<dbReference type="Gene3D" id="1.10.274.50">
    <property type="match status" value="1"/>
</dbReference>
<dbReference type="Gene3D" id="3.90.320.10">
    <property type="match status" value="1"/>
</dbReference>
<dbReference type="Gene3D" id="3.40.50.300">
    <property type="entry name" value="P-loop containing nucleotide triphosphate hydrolases"/>
    <property type="match status" value="4"/>
</dbReference>
<dbReference type="HAMAP" id="MF_01451">
    <property type="entry name" value="AddA"/>
    <property type="match status" value="1"/>
</dbReference>
<dbReference type="InterPro" id="IPR014152">
    <property type="entry name" value="AddA"/>
</dbReference>
<dbReference type="InterPro" id="IPR014017">
    <property type="entry name" value="DNA_helicase_UvrD-like_C"/>
</dbReference>
<dbReference type="InterPro" id="IPR000212">
    <property type="entry name" value="DNA_helicase_UvrD/REP"/>
</dbReference>
<dbReference type="InterPro" id="IPR027417">
    <property type="entry name" value="P-loop_NTPase"/>
</dbReference>
<dbReference type="InterPro" id="IPR011604">
    <property type="entry name" value="PDDEXK-like_dom_sf"/>
</dbReference>
<dbReference type="InterPro" id="IPR038726">
    <property type="entry name" value="PDDEXK_AddAB-type"/>
</dbReference>
<dbReference type="InterPro" id="IPR011335">
    <property type="entry name" value="Restrct_endonuc-II-like"/>
</dbReference>
<dbReference type="InterPro" id="IPR014016">
    <property type="entry name" value="UvrD-like_ATP-bd"/>
</dbReference>
<dbReference type="NCBIfam" id="TIGR02785">
    <property type="entry name" value="addA_Gpos"/>
    <property type="match status" value="1"/>
</dbReference>
<dbReference type="PANTHER" id="PTHR11070:SF48">
    <property type="entry name" value="ATP-DEPENDENT HELICASE_NUCLEASE SUBUNIT A"/>
    <property type="match status" value="1"/>
</dbReference>
<dbReference type="PANTHER" id="PTHR11070">
    <property type="entry name" value="UVRD / RECB / PCRA DNA HELICASE FAMILY MEMBER"/>
    <property type="match status" value="1"/>
</dbReference>
<dbReference type="Pfam" id="PF12705">
    <property type="entry name" value="PDDEXK_1"/>
    <property type="match status" value="1"/>
</dbReference>
<dbReference type="Pfam" id="PF00580">
    <property type="entry name" value="UvrD-helicase"/>
    <property type="match status" value="1"/>
</dbReference>
<dbReference type="Pfam" id="PF13361">
    <property type="entry name" value="UvrD_C"/>
    <property type="match status" value="1"/>
</dbReference>
<dbReference type="SUPFAM" id="SSF52540">
    <property type="entry name" value="P-loop containing nucleoside triphosphate hydrolases"/>
    <property type="match status" value="1"/>
</dbReference>
<dbReference type="SUPFAM" id="SSF52980">
    <property type="entry name" value="Restriction endonuclease-like"/>
    <property type="match status" value="1"/>
</dbReference>
<dbReference type="PROSITE" id="PS51198">
    <property type="entry name" value="UVRD_HELICASE_ATP_BIND"/>
    <property type="match status" value="1"/>
</dbReference>
<dbReference type="PROSITE" id="PS51217">
    <property type="entry name" value="UVRD_HELICASE_CTER"/>
    <property type="match status" value="1"/>
</dbReference>
<evidence type="ECO:0000255" key="1">
    <source>
        <dbReference type="HAMAP-Rule" id="MF_01451"/>
    </source>
</evidence>